<keyword id="KW-0378">Hydrolase</keyword>
<keyword id="KW-1185">Reference proteome</keyword>
<name>DNCH_ACAM1</name>
<accession>B0CEN8</accession>
<protein>
    <recommendedName>
        <fullName evidence="1">1,4-dihydroxy-2-naphthoyl-CoA hydrolase</fullName>
        <shortName evidence="1">DHNA-CoA hydrolase</shortName>
        <ecNumber evidence="1">3.1.2.28</ecNumber>
    </recommendedName>
    <alternativeName>
        <fullName evidence="1">DHNA-CoA thioesterase</fullName>
    </alternativeName>
</protein>
<comment type="function">
    <text evidence="1">Catalyzes the hydrolysis of 1,4-dihydroxy-2-naphthoyl-CoA (DHNA-CoA) to 1,4-dihydroxy-2-naphthoate (DHNA), a reaction involved in phylloquinone (vitamin K1) biosynthesis.</text>
</comment>
<comment type="catalytic activity">
    <reaction evidence="1">
        <text>1,4-dihydroxy-2-naphthoyl-CoA + H2O = 1,4-dihydroxy-2-naphthoate + CoA + H(+)</text>
        <dbReference type="Rhea" id="RHEA:26309"/>
        <dbReference type="ChEBI" id="CHEBI:11173"/>
        <dbReference type="ChEBI" id="CHEBI:15377"/>
        <dbReference type="ChEBI" id="CHEBI:15378"/>
        <dbReference type="ChEBI" id="CHEBI:57287"/>
        <dbReference type="ChEBI" id="CHEBI:58897"/>
        <dbReference type="EC" id="3.1.2.28"/>
    </reaction>
</comment>
<comment type="pathway">
    <text evidence="1">Cofactor biosynthesis; phylloquinone biosynthesis.</text>
</comment>
<comment type="pathway">
    <text evidence="1">Quinol/quinone metabolism; 1,4-dihydroxy-2-naphthoate biosynthesis; 1,4-dihydroxy-2-naphthoate from chorismate: step 7/7.</text>
</comment>
<comment type="similarity">
    <text evidence="1">Belongs to the 4-hydroxybenzoyl-CoA thioesterase family. DHNA-CoA hydrolase subfamily.</text>
</comment>
<proteinExistence type="inferred from homology"/>
<sequence>MYTRTVRLQDTDAAGVVYFTSALDICHEAFEDSLMGAGIDIRTFFSNPDTATPIIHADIDFLKPSFCGDQLTLQLSTHQLAEDEFEVRYNITAVNKGERLIAKATIRHVCINPINRQRQPLPKELVTWIQRWSLAMS</sequence>
<organism>
    <name type="scientific">Acaryochloris marina (strain MBIC 11017)</name>
    <dbReference type="NCBI Taxonomy" id="329726"/>
    <lineage>
        <taxon>Bacteria</taxon>
        <taxon>Bacillati</taxon>
        <taxon>Cyanobacteriota</taxon>
        <taxon>Cyanophyceae</taxon>
        <taxon>Acaryochloridales</taxon>
        <taxon>Acaryochloridaceae</taxon>
        <taxon>Acaryochloris</taxon>
    </lineage>
</organism>
<dbReference type="EC" id="3.1.2.28" evidence="1"/>
<dbReference type="EMBL" id="CP000828">
    <property type="protein sequence ID" value="ABW28143.1"/>
    <property type="molecule type" value="Genomic_DNA"/>
</dbReference>
<dbReference type="RefSeq" id="WP_010468745.1">
    <property type="nucleotide sequence ID" value="NC_009925.1"/>
</dbReference>
<dbReference type="SMR" id="B0CEN8"/>
<dbReference type="STRING" id="329726.AM1_3146"/>
<dbReference type="KEGG" id="amr:AM1_3146"/>
<dbReference type="eggNOG" id="COG0824">
    <property type="taxonomic scope" value="Bacteria"/>
</dbReference>
<dbReference type="HOGENOM" id="CLU_101141_5_3_3"/>
<dbReference type="OrthoDB" id="9800856at2"/>
<dbReference type="UniPathway" id="UPA00995"/>
<dbReference type="UniPathway" id="UPA01057">
    <property type="reaction ID" value="UER01033"/>
</dbReference>
<dbReference type="Proteomes" id="UP000000268">
    <property type="component" value="Chromosome"/>
</dbReference>
<dbReference type="GO" id="GO:0061522">
    <property type="term" value="F:1,4-dihydroxy-2-naphthoyl-CoA thioesterase activity"/>
    <property type="evidence" value="ECO:0007669"/>
    <property type="project" value="UniProtKB-EC"/>
</dbReference>
<dbReference type="GO" id="GO:0047617">
    <property type="term" value="F:fatty acyl-CoA hydrolase activity"/>
    <property type="evidence" value="ECO:0007669"/>
    <property type="project" value="TreeGrafter"/>
</dbReference>
<dbReference type="GO" id="GO:0042372">
    <property type="term" value="P:phylloquinone biosynthetic process"/>
    <property type="evidence" value="ECO:0007669"/>
    <property type="project" value="UniProtKB-UniRule"/>
</dbReference>
<dbReference type="CDD" id="cd00586">
    <property type="entry name" value="4HBT"/>
    <property type="match status" value="1"/>
</dbReference>
<dbReference type="Gene3D" id="3.10.129.10">
    <property type="entry name" value="Hotdog Thioesterase"/>
    <property type="match status" value="1"/>
</dbReference>
<dbReference type="HAMAP" id="MF_02101">
    <property type="entry name" value="DHNA_CoA_hydrolase"/>
    <property type="match status" value="1"/>
</dbReference>
<dbReference type="InterPro" id="IPR050563">
    <property type="entry name" value="4-hydroxybenzoyl-CoA_TE"/>
</dbReference>
<dbReference type="InterPro" id="IPR022829">
    <property type="entry name" value="DHNA_CoA_hydrolase"/>
</dbReference>
<dbReference type="InterPro" id="IPR029069">
    <property type="entry name" value="HotDog_dom_sf"/>
</dbReference>
<dbReference type="PANTHER" id="PTHR31793">
    <property type="entry name" value="4-HYDROXYBENZOYL-COA THIOESTERASE FAMILY MEMBER"/>
    <property type="match status" value="1"/>
</dbReference>
<dbReference type="PANTHER" id="PTHR31793:SF37">
    <property type="entry name" value="ACYL-COA THIOESTER HYDROLASE YBGC"/>
    <property type="match status" value="1"/>
</dbReference>
<dbReference type="Pfam" id="PF13279">
    <property type="entry name" value="4HBT_2"/>
    <property type="match status" value="1"/>
</dbReference>
<dbReference type="SUPFAM" id="SSF54637">
    <property type="entry name" value="Thioesterase/thiol ester dehydrase-isomerase"/>
    <property type="match status" value="1"/>
</dbReference>
<feature type="chain" id="PRO_0000377007" description="1,4-dihydroxy-2-naphthoyl-CoA hydrolase">
    <location>
        <begin position="1"/>
        <end position="137"/>
    </location>
</feature>
<feature type="active site" evidence="1">
    <location>
        <position position="12"/>
    </location>
</feature>
<gene>
    <name type="ordered locus">AM1_3146</name>
</gene>
<evidence type="ECO:0000255" key="1">
    <source>
        <dbReference type="HAMAP-Rule" id="MF_02101"/>
    </source>
</evidence>
<reference key="1">
    <citation type="journal article" date="2008" name="Proc. Natl. Acad. Sci. U.S.A.">
        <title>Niche adaptation and genome expansion in the chlorophyll d-producing cyanobacterium Acaryochloris marina.</title>
        <authorList>
            <person name="Swingley W.D."/>
            <person name="Chen M."/>
            <person name="Cheung P.C."/>
            <person name="Conrad A.L."/>
            <person name="Dejesa L.C."/>
            <person name="Hao J."/>
            <person name="Honchak B.M."/>
            <person name="Karbach L.E."/>
            <person name="Kurdoglu A."/>
            <person name="Lahiri S."/>
            <person name="Mastrian S.D."/>
            <person name="Miyashita H."/>
            <person name="Page L."/>
            <person name="Ramakrishna P."/>
            <person name="Satoh S."/>
            <person name="Sattley W.M."/>
            <person name="Shimada Y."/>
            <person name="Taylor H.L."/>
            <person name="Tomo T."/>
            <person name="Tsuchiya T."/>
            <person name="Wang Z.T."/>
            <person name="Raymond J."/>
            <person name="Mimuro M."/>
            <person name="Blankenship R.E."/>
            <person name="Touchman J.W."/>
        </authorList>
    </citation>
    <scope>NUCLEOTIDE SEQUENCE [LARGE SCALE GENOMIC DNA]</scope>
    <source>
        <strain>MBIC 11017</strain>
    </source>
</reference>